<comment type="function">
    <text evidence="1">Catalyzes the conversion of N-formimidoyl-L-glutamate to L-glutamate and formamide.</text>
</comment>
<comment type="catalytic activity">
    <reaction evidence="1">
        <text>N-formimidoyl-L-glutamate + H2O = formamide + L-glutamate</text>
        <dbReference type="Rhea" id="RHEA:22492"/>
        <dbReference type="ChEBI" id="CHEBI:15377"/>
        <dbReference type="ChEBI" id="CHEBI:16397"/>
        <dbReference type="ChEBI" id="CHEBI:29985"/>
        <dbReference type="ChEBI" id="CHEBI:58928"/>
        <dbReference type="EC" id="3.5.3.8"/>
    </reaction>
</comment>
<comment type="cofactor">
    <cofactor evidence="1">
        <name>Mn(2+)</name>
        <dbReference type="ChEBI" id="CHEBI:29035"/>
    </cofactor>
    <text evidence="1">Binds 2 manganese ions per subunit.</text>
</comment>
<comment type="pathway">
    <text evidence="1">Amino-acid degradation; L-histidine degradation into L-glutamate; L-glutamate from N-formimidoyl-L-glutamate (hydrolase route): step 1/1.</text>
</comment>
<comment type="similarity">
    <text evidence="1">Belongs to the arginase family.</text>
</comment>
<sequence length="322" mass="34632">MYQPPEASCWTGRVDSVSDERAFRLHQRIRLLDLSGPLTPLEQAAAFIGFVCDEGVRRNQGRQGAKEAPAAVKAALARLPWHLPSGASIYDAGDIVCADGRLEQSQAELGKAIARLLQSGVAPVVIGGGHETAYGHYLGVRAALGPNARLGIINIDAHFDLRPYDNGPTSGTMFRQILDEDKQVGYCCLGIQRLGNTAALFADAERYGCEYILEEQLTAGAIEAAYERIEQFASRHDSVILTICMDAISAAAAPGVSAPSPFGLSPSLARALIRRIVSHPKTISVDLCEVNPLVDEGGKTVALAAAFCMEALLHFRRLQPRR</sequence>
<reference key="1">
    <citation type="journal article" date="2007" name="Proc. Natl. Acad. Sci. U.S.A.">
        <title>Genome and proteome of long-chain alkane degrading Geobacillus thermodenitrificans NG80-2 isolated from a deep-subsurface oil reservoir.</title>
        <authorList>
            <person name="Feng L."/>
            <person name="Wang W."/>
            <person name="Cheng J."/>
            <person name="Ren Y."/>
            <person name="Zhao G."/>
            <person name="Gao C."/>
            <person name="Tang Y."/>
            <person name="Liu X."/>
            <person name="Han W."/>
            <person name="Peng X."/>
            <person name="Liu R."/>
            <person name="Wang L."/>
        </authorList>
    </citation>
    <scope>NUCLEOTIDE SEQUENCE [LARGE SCALE GENOMIC DNA]</scope>
    <source>
        <strain>NG80-2</strain>
    </source>
</reference>
<name>HUTG_GEOTN</name>
<accession>A4IMP1</accession>
<proteinExistence type="inferred from homology"/>
<feature type="chain" id="PRO_1000046298" description="Formimidoylglutamase">
    <location>
        <begin position="1"/>
        <end position="322"/>
    </location>
</feature>
<feature type="binding site" evidence="1">
    <location>
        <position position="130"/>
    </location>
    <ligand>
        <name>Mn(2+)</name>
        <dbReference type="ChEBI" id="CHEBI:29035"/>
        <label>1</label>
    </ligand>
</feature>
<feature type="binding site" evidence="1">
    <location>
        <position position="156"/>
    </location>
    <ligand>
        <name>Mn(2+)</name>
        <dbReference type="ChEBI" id="CHEBI:29035"/>
        <label>1</label>
    </ligand>
</feature>
<feature type="binding site" evidence="1">
    <location>
        <position position="156"/>
    </location>
    <ligand>
        <name>Mn(2+)</name>
        <dbReference type="ChEBI" id="CHEBI:29035"/>
        <label>2</label>
    </ligand>
</feature>
<feature type="binding site" evidence="1">
    <location>
        <position position="158"/>
    </location>
    <ligand>
        <name>Mn(2+)</name>
        <dbReference type="ChEBI" id="CHEBI:29035"/>
        <label>2</label>
    </ligand>
</feature>
<feature type="binding site" evidence="1">
    <location>
        <position position="160"/>
    </location>
    <ligand>
        <name>Mn(2+)</name>
        <dbReference type="ChEBI" id="CHEBI:29035"/>
        <label>1</label>
    </ligand>
</feature>
<feature type="binding site" evidence="1">
    <location>
        <position position="244"/>
    </location>
    <ligand>
        <name>Mn(2+)</name>
        <dbReference type="ChEBI" id="CHEBI:29035"/>
        <label>1</label>
    </ligand>
</feature>
<feature type="binding site" evidence="1">
    <location>
        <position position="244"/>
    </location>
    <ligand>
        <name>Mn(2+)</name>
        <dbReference type="ChEBI" id="CHEBI:29035"/>
        <label>2</label>
    </ligand>
</feature>
<feature type="binding site" evidence="1">
    <location>
        <position position="246"/>
    </location>
    <ligand>
        <name>Mn(2+)</name>
        <dbReference type="ChEBI" id="CHEBI:29035"/>
        <label>2</label>
    </ligand>
</feature>
<protein>
    <recommendedName>
        <fullName evidence="1">Formimidoylglutamase</fullName>
        <ecNumber evidence="1">3.5.3.8</ecNumber>
    </recommendedName>
    <alternativeName>
        <fullName evidence="1">Formiminoglutamase</fullName>
    </alternativeName>
    <alternativeName>
        <fullName evidence="1">Formiminoglutamate hydrolase</fullName>
    </alternativeName>
</protein>
<dbReference type="EC" id="3.5.3.8" evidence="1"/>
<dbReference type="EMBL" id="CP000557">
    <property type="protein sequence ID" value="ABO66595.1"/>
    <property type="molecule type" value="Genomic_DNA"/>
</dbReference>
<dbReference type="RefSeq" id="WP_011887216.1">
    <property type="nucleotide sequence ID" value="NC_009328.1"/>
</dbReference>
<dbReference type="SMR" id="A4IMP1"/>
<dbReference type="GeneID" id="87621189"/>
<dbReference type="KEGG" id="gtn:GTNG_1223"/>
<dbReference type="eggNOG" id="COG0010">
    <property type="taxonomic scope" value="Bacteria"/>
</dbReference>
<dbReference type="HOGENOM" id="CLU_039478_2_0_9"/>
<dbReference type="UniPathway" id="UPA00379">
    <property type="reaction ID" value="UER00552"/>
</dbReference>
<dbReference type="Proteomes" id="UP000001578">
    <property type="component" value="Chromosome"/>
</dbReference>
<dbReference type="GO" id="GO:0008783">
    <property type="term" value="F:agmatinase activity"/>
    <property type="evidence" value="ECO:0007669"/>
    <property type="project" value="TreeGrafter"/>
</dbReference>
<dbReference type="GO" id="GO:0050415">
    <property type="term" value="F:formimidoylglutamase activity"/>
    <property type="evidence" value="ECO:0007669"/>
    <property type="project" value="UniProtKB-UniRule"/>
</dbReference>
<dbReference type="GO" id="GO:0030145">
    <property type="term" value="F:manganese ion binding"/>
    <property type="evidence" value="ECO:0007669"/>
    <property type="project" value="UniProtKB-UniRule"/>
</dbReference>
<dbReference type="GO" id="GO:0019556">
    <property type="term" value="P:L-histidine catabolic process to glutamate and formamide"/>
    <property type="evidence" value="ECO:0007669"/>
    <property type="project" value="UniProtKB-UniPathway"/>
</dbReference>
<dbReference type="GO" id="GO:0019557">
    <property type="term" value="P:L-histidine catabolic process to glutamate and formate"/>
    <property type="evidence" value="ECO:0007669"/>
    <property type="project" value="UniProtKB-UniPathway"/>
</dbReference>
<dbReference type="GO" id="GO:0033389">
    <property type="term" value="P:putrescine biosynthetic process from arginine, via agmatine"/>
    <property type="evidence" value="ECO:0007669"/>
    <property type="project" value="TreeGrafter"/>
</dbReference>
<dbReference type="CDD" id="cd09988">
    <property type="entry name" value="Formimidoylglutamase"/>
    <property type="match status" value="1"/>
</dbReference>
<dbReference type="Gene3D" id="3.40.800.10">
    <property type="entry name" value="Ureohydrolase domain"/>
    <property type="match status" value="1"/>
</dbReference>
<dbReference type="HAMAP" id="MF_00737">
    <property type="entry name" value="Formimidoylglutam"/>
    <property type="match status" value="1"/>
</dbReference>
<dbReference type="InterPro" id="IPR005923">
    <property type="entry name" value="HutG"/>
</dbReference>
<dbReference type="InterPro" id="IPR006035">
    <property type="entry name" value="Ureohydrolase"/>
</dbReference>
<dbReference type="InterPro" id="IPR023696">
    <property type="entry name" value="Ureohydrolase_dom_sf"/>
</dbReference>
<dbReference type="NCBIfam" id="TIGR01227">
    <property type="entry name" value="hutG"/>
    <property type="match status" value="1"/>
</dbReference>
<dbReference type="PANTHER" id="PTHR11358">
    <property type="entry name" value="ARGINASE/AGMATINASE"/>
    <property type="match status" value="1"/>
</dbReference>
<dbReference type="PANTHER" id="PTHR11358:SF35">
    <property type="entry name" value="FORMIMIDOYLGLUTAMASE"/>
    <property type="match status" value="1"/>
</dbReference>
<dbReference type="Pfam" id="PF00491">
    <property type="entry name" value="Arginase"/>
    <property type="match status" value="1"/>
</dbReference>
<dbReference type="PIRSF" id="PIRSF036979">
    <property type="entry name" value="Arginase"/>
    <property type="match status" value="1"/>
</dbReference>
<dbReference type="SUPFAM" id="SSF52768">
    <property type="entry name" value="Arginase/deacetylase"/>
    <property type="match status" value="1"/>
</dbReference>
<dbReference type="PROSITE" id="PS51409">
    <property type="entry name" value="ARGINASE_2"/>
    <property type="match status" value="1"/>
</dbReference>
<gene>
    <name evidence="1" type="primary">hutG</name>
    <name type="ordered locus">GTNG_1223</name>
</gene>
<keyword id="KW-0369">Histidine metabolism</keyword>
<keyword id="KW-0378">Hydrolase</keyword>
<keyword id="KW-0464">Manganese</keyword>
<keyword id="KW-0479">Metal-binding</keyword>
<evidence type="ECO:0000255" key="1">
    <source>
        <dbReference type="HAMAP-Rule" id="MF_00737"/>
    </source>
</evidence>
<organism>
    <name type="scientific">Geobacillus thermodenitrificans (strain NG80-2)</name>
    <dbReference type="NCBI Taxonomy" id="420246"/>
    <lineage>
        <taxon>Bacteria</taxon>
        <taxon>Bacillati</taxon>
        <taxon>Bacillota</taxon>
        <taxon>Bacilli</taxon>
        <taxon>Bacillales</taxon>
        <taxon>Anoxybacillaceae</taxon>
        <taxon>Geobacillus</taxon>
    </lineage>
</organism>